<protein>
    <recommendedName>
        <fullName evidence="1">2-isopropylmalate synthase</fullName>
        <ecNumber evidence="1">2.3.3.13</ecNumber>
    </recommendedName>
    <alternativeName>
        <fullName evidence="1">Alpha-IPM synthase</fullName>
    </alternativeName>
    <alternativeName>
        <fullName evidence="1">Alpha-isopropylmalate synthase</fullName>
    </alternativeName>
</protein>
<sequence length="486" mass="53768">MRKVYIFDTTLRDGEQTPGVSLTVEEKVEIAKQLAKLNVDVIEAGFPIASEGEFKAVKKIATEVEDPTIAALARAVEKDIDRAGEALRNAEKNRIHTFIATSPIHMKYKLRKEPEEVKKLAVKAVEHATKYTEDVEFSAEDATRSDWDFLVEVYEAVIDAGATVINVPDTVGYATPEEFYELVRYLRRNISNIKGVQISVHCHDDLGLAVANSLSAIRAGADQVEVTVNGIGERAGNAALEEVIVALDVRRDFYKVKTDVNLKEIARTSKLVSHLTGIEVPPNKAIVGGNAFAHESGIHQDGVLKERTTYEIIDPKKLGFSGSKIVLGKHSGRHAFRKKLEELGYSLTEEHLERAFKKFKDIADRKRWITDTDIEAIIQEELTKSNGKLKVEIIHVTSGKVSTATVRISMNGEERIEVAWFKNGPIDALFSAINKALGEEFKLREYRVSSVTSGKDSLGEVLVRVEVNGEIFVGRGLSTDIIEASA</sequence>
<keyword id="KW-0028">Amino-acid biosynthesis</keyword>
<keyword id="KW-0100">Branched-chain amino acid biosynthesis</keyword>
<keyword id="KW-0963">Cytoplasm</keyword>
<keyword id="KW-0432">Leucine biosynthesis</keyword>
<keyword id="KW-0464">Manganese</keyword>
<keyword id="KW-0479">Metal-binding</keyword>
<keyword id="KW-0808">Transferase</keyword>
<proteinExistence type="inferred from homology"/>
<organism>
    <name type="scientific">Pyrococcus abyssi (strain GE5 / Orsay)</name>
    <dbReference type="NCBI Taxonomy" id="272844"/>
    <lineage>
        <taxon>Archaea</taxon>
        <taxon>Methanobacteriati</taxon>
        <taxon>Methanobacteriota</taxon>
        <taxon>Thermococci</taxon>
        <taxon>Thermococcales</taxon>
        <taxon>Thermococcaceae</taxon>
        <taxon>Pyrococcus</taxon>
    </lineage>
</organism>
<gene>
    <name evidence="1" type="primary">leuA</name>
    <name type="ordered locus">PYRAB13490</name>
    <name type="ORF">PAB0890</name>
</gene>
<dbReference type="EC" id="2.3.3.13" evidence="1"/>
<dbReference type="EMBL" id="AJ248287">
    <property type="protein sequence ID" value="CAB50254.1"/>
    <property type="molecule type" value="Genomic_DNA"/>
</dbReference>
<dbReference type="EMBL" id="HE613800">
    <property type="protein sequence ID" value="CCE70792.1"/>
    <property type="molecule type" value="Genomic_DNA"/>
</dbReference>
<dbReference type="PIR" id="A75045">
    <property type="entry name" value="A75045"/>
</dbReference>
<dbReference type="RefSeq" id="WP_010868464.1">
    <property type="nucleotide sequence ID" value="NC_000868.1"/>
</dbReference>
<dbReference type="SMR" id="Q9UZ08"/>
<dbReference type="STRING" id="272844.PAB0890"/>
<dbReference type="KEGG" id="pab:PAB0890"/>
<dbReference type="PATRIC" id="fig|272844.11.peg.1435"/>
<dbReference type="eggNOG" id="arCOG02092">
    <property type="taxonomic scope" value="Archaea"/>
</dbReference>
<dbReference type="HOGENOM" id="CLU_022158_0_1_2"/>
<dbReference type="OrthoDB" id="6555at2157"/>
<dbReference type="PhylomeDB" id="Q9UZ08"/>
<dbReference type="UniPathway" id="UPA00048">
    <property type="reaction ID" value="UER00070"/>
</dbReference>
<dbReference type="Proteomes" id="UP000000810">
    <property type="component" value="Chromosome"/>
</dbReference>
<dbReference type="Proteomes" id="UP000009139">
    <property type="component" value="Chromosome"/>
</dbReference>
<dbReference type="GO" id="GO:0005737">
    <property type="term" value="C:cytoplasm"/>
    <property type="evidence" value="ECO:0007669"/>
    <property type="project" value="UniProtKB-SubCell"/>
</dbReference>
<dbReference type="GO" id="GO:0003852">
    <property type="term" value="F:2-isopropylmalate synthase activity"/>
    <property type="evidence" value="ECO:0007669"/>
    <property type="project" value="UniProtKB-UniRule"/>
</dbReference>
<dbReference type="GO" id="GO:0003985">
    <property type="term" value="F:acetyl-CoA C-acetyltransferase activity"/>
    <property type="evidence" value="ECO:0007669"/>
    <property type="project" value="UniProtKB-UniRule"/>
</dbReference>
<dbReference type="GO" id="GO:0030145">
    <property type="term" value="F:manganese ion binding"/>
    <property type="evidence" value="ECO:0007669"/>
    <property type="project" value="UniProtKB-UniRule"/>
</dbReference>
<dbReference type="GO" id="GO:0009098">
    <property type="term" value="P:L-leucine biosynthetic process"/>
    <property type="evidence" value="ECO:0007669"/>
    <property type="project" value="UniProtKB-UniRule"/>
</dbReference>
<dbReference type="CDD" id="cd07940">
    <property type="entry name" value="DRE_TIM_IPMS"/>
    <property type="match status" value="1"/>
</dbReference>
<dbReference type="FunFam" id="1.10.238.260:FF:000001">
    <property type="entry name" value="2-isopropylmalate synthase"/>
    <property type="match status" value="1"/>
</dbReference>
<dbReference type="FunFam" id="3.20.20.70:FF:000010">
    <property type="entry name" value="2-isopropylmalate synthase"/>
    <property type="match status" value="1"/>
</dbReference>
<dbReference type="Gene3D" id="1.10.238.260">
    <property type="match status" value="1"/>
</dbReference>
<dbReference type="Gene3D" id="3.30.160.270">
    <property type="match status" value="1"/>
</dbReference>
<dbReference type="Gene3D" id="3.20.20.70">
    <property type="entry name" value="Aldolase class I"/>
    <property type="match status" value="1"/>
</dbReference>
<dbReference type="HAMAP" id="MF_01025">
    <property type="entry name" value="LeuA_type1"/>
    <property type="match status" value="1"/>
</dbReference>
<dbReference type="InterPro" id="IPR050073">
    <property type="entry name" value="2-IPM_HCS-like"/>
</dbReference>
<dbReference type="InterPro" id="IPR013709">
    <property type="entry name" value="2-isopropylmalate_synth_dimer"/>
</dbReference>
<dbReference type="InterPro" id="IPR002034">
    <property type="entry name" value="AIPM/Hcit_synth_CS"/>
</dbReference>
<dbReference type="InterPro" id="IPR013785">
    <property type="entry name" value="Aldolase_TIM"/>
</dbReference>
<dbReference type="InterPro" id="IPR054691">
    <property type="entry name" value="LeuA/HCS_post-cat"/>
</dbReference>
<dbReference type="InterPro" id="IPR036230">
    <property type="entry name" value="LeuA_allosteric_dom_sf"/>
</dbReference>
<dbReference type="InterPro" id="IPR005671">
    <property type="entry name" value="LeuA_bact_synth"/>
</dbReference>
<dbReference type="InterPro" id="IPR000891">
    <property type="entry name" value="PYR_CT"/>
</dbReference>
<dbReference type="NCBIfam" id="TIGR00973">
    <property type="entry name" value="leuA_bact"/>
    <property type="match status" value="1"/>
</dbReference>
<dbReference type="NCBIfam" id="NF002085">
    <property type="entry name" value="PRK00915.1-2"/>
    <property type="match status" value="1"/>
</dbReference>
<dbReference type="NCBIfam" id="NF002086">
    <property type="entry name" value="PRK00915.1-3"/>
    <property type="match status" value="1"/>
</dbReference>
<dbReference type="PANTHER" id="PTHR10277:SF9">
    <property type="entry name" value="2-ISOPROPYLMALATE SYNTHASE 1, CHLOROPLASTIC-RELATED"/>
    <property type="match status" value="1"/>
</dbReference>
<dbReference type="PANTHER" id="PTHR10277">
    <property type="entry name" value="HOMOCITRATE SYNTHASE-RELATED"/>
    <property type="match status" value="1"/>
</dbReference>
<dbReference type="Pfam" id="PF22617">
    <property type="entry name" value="HCS_D2"/>
    <property type="match status" value="1"/>
</dbReference>
<dbReference type="Pfam" id="PF00682">
    <property type="entry name" value="HMGL-like"/>
    <property type="match status" value="1"/>
</dbReference>
<dbReference type="Pfam" id="PF08502">
    <property type="entry name" value="LeuA_dimer"/>
    <property type="match status" value="1"/>
</dbReference>
<dbReference type="SMART" id="SM00917">
    <property type="entry name" value="LeuA_dimer"/>
    <property type="match status" value="1"/>
</dbReference>
<dbReference type="SUPFAM" id="SSF110921">
    <property type="entry name" value="2-isopropylmalate synthase LeuA, allosteric (dimerisation) domain"/>
    <property type="match status" value="1"/>
</dbReference>
<dbReference type="SUPFAM" id="SSF51569">
    <property type="entry name" value="Aldolase"/>
    <property type="match status" value="1"/>
</dbReference>
<dbReference type="PROSITE" id="PS00815">
    <property type="entry name" value="AIPM_HOMOCIT_SYNTH_1"/>
    <property type="match status" value="1"/>
</dbReference>
<dbReference type="PROSITE" id="PS00816">
    <property type="entry name" value="AIPM_HOMOCIT_SYNTH_2"/>
    <property type="match status" value="1"/>
</dbReference>
<dbReference type="PROSITE" id="PS50991">
    <property type="entry name" value="PYR_CT"/>
    <property type="match status" value="1"/>
</dbReference>
<reference key="1">
    <citation type="journal article" date="2003" name="Mol. Microbiol.">
        <title>An integrated analysis of the genome of the hyperthermophilic archaeon Pyrococcus abyssi.</title>
        <authorList>
            <person name="Cohen G.N."/>
            <person name="Barbe V."/>
            <person name="Flament D."/>
            <person name="Galperin M."/>
            <person name="Heilig R."/>
            <person name="Lecompte O."/>
            <person name="Poch O."/>
            <person name="Prieur D."/>
            <person name="Querellou J."/>
            <person name="Ripp R."/>
            <person name="Thierry J.-C."/>
            <person name="Van der Oost J."/>
            <person name="Weissenbach J."/>
            <person name="Zivanovic Y."/>
            <person name="Forterre P."/>
        </authorList>
    </citation>
    <scope>NUCLEOTIDE SEQUENCE [LARGE SCALE GENOMIC DNA]</scope>
    <source>
        <strain>GE5 / Orsay</strain>
    </source>
</reference>
<reference key="2">
    <citation type="journal article" date="2012" name="Curr. Microbiol.">
        <title>Re-annotation of two hyperthermophilic archaea Pyrococcus abyssi GE5 and Pyrococcus furiosus DSM 3638.</title>
        <authorList>
            <person name="Gao J."/>
            <person name="Wang J."/>
        </authorList>
    </citation>
    <scope>GENOME REANNOTATION</scope>
    <source>
        <strain>GE5 / Orsay</strain>
    </source>
</reference>
<comment type="function">
    <text evidence="1">Catalyzes the condensation of the acetyl group of acetyl-CoA with 3-methyl-2-oxobutanoate (2-ketoisovalerate) to form 3-carboxy-3-hydroxy-4-methylpentanoate (2-isopropylmalate).</text>
</comment>
<comment type="catalytic activity">
    <reaction evidence="1">
        <text>3-methyl-2-oxobutanoate + acetyl-CoA + H2O = (2S)-2-isopropylmalate + CoA + H(+)</text>
        <dbReference type="Rhea" id="RHEA:21524"/>
        <dbReference type="ChEBI" id="CHEBI:1178"/>
        <dbReference type="ChEBI" id="CHEBI:11851"/>
        <dbReference type="ChEBI" id="CHEBI:15377"/>
        <dbReference type="ChEBI" id="CHEBI:15378"/>
        <dbReference type="ChEBI" id="CHEBI:57287"/>
        <dbReference type="ChEBI" id="CHEBI:57288"/>
        <dbReference type="EC" id="2.3.3.13"/>
    </reaction>
</comment>
<comment type="cofactor">
    <cofactor evidence="1">
        <name>Mn(2+)</name>
        <dbReference type="ChEBI" id="CHEBI:29035"/>
    </cofactor>
</comment>
<comment type="pathway">
    <text evidence="1">Amino-acid biosynthesis; L-leucine biosynthesis; L-leucine from 3-methyl-2-oxobutanoate: step 1/4.</text>
</comment>
<comment type="subcellular location">
    <subcellularLocation>
        <location evidence="1">Cytoplasm</location>
    </subcellularLocation>
</comment>
<comment type="similarity">
    <text evidence="1 2">Belongs to the alpha-IPM synthase/homocitrate synthase family. LeuA type 1 subfamily.</text>
</comment>
<name>LEU1_PYRAB</name>
<evidence type="ECO:0000255" key="1">
    <source>
        <dbReference type="HAMAP-Rule" id="MF_01025"/>
    </source>
</evidence>
<evidence type="ECO:0000305" key="2"/>
<accession>Q9UZ08</accession>
<accession>G8ZHF5</accession>
<feature type="chain" id="PRO_0000140418" description="2-isopropylmalate synthase">
    <location>
        <begin position="1"/>
        <end position="486"/>
    </location>
</feature>
<feature type="domain" description="Pyruvate carboxyltransferase" evidence="1">
    <location>
        <begin position="4"/>
        <end position="266"/>
    </location>
</feature>
<feature type="region of interest" description="Regulatory domain" evidence="1">
    <location>
        <begin position="390"/>
        <end position="486"/>
    </location>
</feature>
<feature type="binding site" evidence="1">
    <location>
        <position position="13"/>
    </location>
    <ligand>
        <name>Mn(2+)</name>
        <dbReference type="ChEBI" id="CHEBI:29035"/>
    </ligand>
</feature>
<feature type="binding site" evidence="1">
    <location>
        <position position="201"/>
    </location>
    <ligand>
        <name>Mn(2+)</name>
        <dbReference type="ChEBI" id="CHEBI:29035"/>
    </ligand>
</feature>
<feature type="binding site" evidence="1">
    <location>
        <position position="203"/>
    </location>
    <ligand>
        <name>Mn(2+)</name>
        <dbReference type="ChEBI" id="CHEBI:29035"/>
    </ligand>
</feature>
<feature type="binding site" evidence="1">
    <location>
        <position position="237"/>
    </location>
    <ligand>
        <name>Mn(2+)</name>
        <dbReference type="ChEBI" id="CHEBI:29035"/>
    </ligand>
</feature>